<accession>Q8RIQ3</accession>
<organism>
    <name type="scientific">Fusobacterium nucleatum subsp. nucleatum (strain ATCC 25586 / DSM 15643 / BCRC 10681 / CIP 101130 / JCM 8532 / KCTC 2640 / LMG 13131 / VPI 4355)</name>
    <dbReference type="NCBI Taxonomy" id="190304"/>
    <lineage>
        <taxon>Bacteria</taxon>
        <taxon>Fusobacteriati</taxon>
        <taxon>Fusobacteriota</taxon>
        <taxon>Fusobacteriia</taxon>
        <taxon>Fusobacteriales</taxon>
        <taxon>Fusobacteriaceae</taxon>
        <taxon>Fusobacterium</taxon>
    </lineage>
</organism>
<gene>
    <name evidence="1" type="primary">leuS</name>
    <name type="ordered locus">FN1517</name>
</gene>
<evidence type="ECO:0000255" key="1">
    <source>
        <dbReference type="HAMAP-Rule" id="MF_00049"/>
    </source>
</evidence>
<sequence>MRDYEFKEIEKKWQERWSKDNIFKTENQVEGKENYYVLSMLPYPSGKLHVGHARNYTIGDVISRYKRMKGYNVLQPMGWDSFGLPAENAAIQNGTHPAIWTKSNIENMRRQLKLMGFSYDWEREIASYTPEYYKWNQWLFKRMYEKGLIYKKKSLVNWCPDCQTVLANEQVEDGMCWRHSKTHVIQKELEQWFFKITDYADELLEGHEEIKDGWPEKVLTMQKNWIGKSFGTELKLKVVETGEDLPIFTTRIDTIYGVSYAVVAPEHPIVEKILKDNPSIKDKVTEMKNTDIIERGAEGREKNGIDSGWHIENPVNKEIVPLWIADYVLMNYGTGAVMGVPAHDERDFVFAGKYNLPVKQVITSKKSDEKVQLPYIEEGVMINSGEFNGLSSKDALVKIAEYVEEKGYGKRTYKYRLKDWGISRQRYWGTPIPALYCEKCGEVLEKDENLPVLLPDDIEFSGNGNPLETSNKFKEATCPCCGGKARRDTDTMDTFVDSSWYFLRYCDPKNLNLPFSKEIVDKWTPVDQYIGGVEHAVMHLLYARFFHKVLRDLGLLSSNEPFKRLLTQGMVLGPSYYSEKENKYLLQKAAIIKGDKAYSQSGEELQVKVEKMSKSKNNGVDPEEMLDKYGADTTRLFIMFAAPPEKELEWNENGLAGAYRFLTRVWRLVFENSELVKNANDEIDYNKLSKEDKTLLIKLNQTIKKVTDAIENNYHFNTAIAANMELINEVQTYVSSSMNSEQAAKILGYTLKKIIIMLSPFVPHFCDEIWEELGEKGYLFNEKWPEYDEKMLSSDETTIAVQVNGKVRGSFEIAKDSEQALVEKTALKLPNVAKHLEGMNVVKIIVIPNKIVNIVVKPQ</sequence>
<dbReference type="EC" id="6.1.1.4" evidence="1"/>
<dbReference type="EMBL" id="AE009951">
    <property type="protein sequence ID" value="AAL93643.1"/>
    <property type="molecule type" value="Genomic_DNA"/>
</dbReference>
<dbReference type="RefSeq" id="NP_602344.1">
    <property type="nucleotide sequence ID" value="NC_003454.1"/>
</dbReference>
<dbReference type="RefSeq" id="WP_011015646.1">
    <property type="nucleotide sequence ID" value="NZ_CP028101.1"/>
</dbReference>
<dbReference type="SMR" id="Q8RIQ3"/>
<dbReference type="FunCoup" id="Q8RIQ3">
    <property type="interactions" value="435"/>
</dbReference>
<dbReference type="STRING" id="190304.FN1517"/>
<dbReference type="PaxDb" id="190304-FN1517"/>
<dbReference type="EnsemblBacteria" id="AAL93643">
    <property type="protein sequence ID" value="AAL93643"/>
    <property type="gene ID" value="FN1517"/>
</dbReference>
<dbReference type="GeneID" id="79782458"/>
<dbReference type="KEGG" id="fnu:FN1517"/>
<dbReference type="PATRIC" id="fig|190304.8.peg.20"/>
<dbReference type="eggNOG" id="COG0495">
    <property type="taxonomic scope" value="Bacteria"/>
</dbReference>
<dbReference type="HOGENOM" id="CLU_004427_0_0_0"/>
<dbReference type="InParanoid" id="Q8RIQ3"/>
<dbReference type="BioCyc" id="FNUC190304:G1FZS-21-MONOMER"/>
<dbReference type="Proteomes" id="UP000002521">
    <property type="component" value="Chromosome"/>
</dbReference>
<dbReference type="GO" id="GO:0005829">
    <property type="term" value="C:cytosol"/>
    <property type="evidence" value="ECO:0000318"/>
    <property type="project" value="GO_Central"/>
</dbReference>
<dbReference type="GO" id="GO:0002161">
    <property type="term" value="F:aminoacyl-tRNA deacylase activity"/>
    <property type="evidence" value="ECO:0007669"/>
    <property type="project" value="InterPro"/>
</dbReference>
<dbReference type="GO" id="GO:0005524">
    <property type="term" value="F:ATP binding"/>
    <property type="evidence" value="ECO:0007669"/>
    <property type="project" value="UniProtKB-UniRule"/>
</dbReference>
<dbReference type="GO" id="GO:0004823">
    <property type="term" value="F:leucine-tRNA ligase activity"/>
    <property type="evidence" value="ECO:0000318"/>
    <property type="project" value="GO_Central"/>
</dbReference>
<dbReference type="GO" id="GO:0006429">
    <property type="term" value="P:leucyl-tRNA aminoacylation"/>
    <property type="evidence" value="ECO:0000318"/>
    <property type="project" value="GO_Central"/>
</dbReference>
<dbReference type="CDD" id="cd07958">
    <property type="entry name" value="Anticodon_Ia_Leu_BEm"/>
    <property type="match status" value="1"/>
</dbReference>
<dbReference type="CDD" id="cd00812">
    <property type="entry name" value="LeuRS_core"/>
    <property type="match status" value="1"/>
</dbReference>
<dbReference type="FunFam" id="1.10.730.10:FF:000130">
    <property type="entry name" value="Leucine--tRNA ligase"/>
    <property type="match status" value="1"/>
</dbReference>
<dbReference type="FunFam" id="3.10.20.590:FF:000001">
    <property type="entry name" value="Leucine--tRNA ligase"/>
    <property type="match status" value="1"/>
</dbReference>
<dbReference type="FunFam" id="3.40.50.620:FF:000003">
    <property type="entry name" value="Leucine--tRNA ligase"/>
    <property type="match status" value="1"/>
</dbReference>
<dbReference type="FunFam" id="3.40.50.620:FF:000212">
    <property type="entry name" value="Leucine--tRNA ligase"/>
    <property type="match status" value="1"/>
</dbReference>
<dbReference type="Gene3D" id="3.40.50.620">
    <property type="entry name" value="HUPs"/>
    <property type="match status" value="2"/>
</dbReference>
<dbReference type="Gene3D" id="1.10.730.10">
    <property type="entry name" value="Isoleucyl-tRNA Synthetase, Domain 1"/>
    <property type="match status" value="2"/>
</dbReference>
<dbReference type="HAMAP" id="MF_00049_B">
    <property type="entry name" value="Leu_tRNA_synth_B"/>
    <property type="match status" value="1"/>
</dbReference>
<dbReference type="InterPro" id="IPR001412">
    <property type="entry name" value="aa-tRNA-synth_I_CS"/>
</dbReference>
<dbReference type="InterPro" id="IPR002300">
    <property type="entry name" value="aa-tRNA-synth_Ia"/>
</dbReference>
<dbReference type="InterPro" id="IPR002302">
    <property type="entry name" value="Leu-tRNA-ligase"/>
</dbReference>
<dbReference type="InterPro" id="IPR025709">
    <property type="entry name" value="Leu_tRNA-synth_edit"/>
</dbReference>
<dbReference type="InterPro" id="IPR013155">
    <property type="entry name" value="M/V/L/I-tRNA-synth_anticd-bd"/>
</dbReference>
<dbReference type="InterPro" id="IPR015413">
    <property type="entry name" value="Methionyl/Leucyl_tRNA_Synth"/>
</dbReference>
<dbReference type="InterPro" id="IPR014729">
    <property type="entry name" value="Rossmann-like_a/b/a_fold"/>
</dbReference>
<dbReference type="InterPro" id="IPR009080">
    <property type="entry name" value="tRNAsynth_Ia_anticodon-bd"/>
</dbReference>
<dbReference type="InterPro" id="IPR009008">
    <property type="entry name" value="Val/Leu/Ile-tRNA-synth_edit"/>
</dbReference>
<dbReference type="NCBIfam" id="TIGR00396">
    <property type="entry name" value="leuS_bact"/>
    <property type="match status" value="1"/>
</dbReference>
<dbReference type="PANTHER" id="PTHR43740:SF2">
    <property type="entry name" value="LEUCINE--TRNA LIGASE, MITOCHONDRIAL"/>
    <property type="match status" value="1"/>
</dbReference>
<dbReference type="PANTHER" id="PTHR43740">
    <property type="entry name" value="LEUCYL-TRNA SYNTHETASE"/>
    <property type="match status" value="1"/>
</dbReference>
<dbReference type="Pfam" id="PF08264">
    <property type="entry name" value="Anticodon_1"/>
    <property type="match status" value="1"/>
</dbReference>
<dbReference type="Pfam" id="PF00133">
    <property type="entry name" value="tRNA-synt_1"/>
    <property type="match status" value="2"/>
</dbReference>
<dbReference type="Pfam" id="PF13603">
    <property type="entry name" value="tRNA-synt_1_2"/>
    <property type="match status" value="1"/>
</dbReference>
<dbReference type="Pfam" id="PF09334">
    <property type="entry name" value="tRNA-synt_1g"/>
    <property type="match status" value="1"/>
</dbReference>
<dbReference type="PRINTS" id="PR00985">
    <property type="entry name" value="TRNASYNTHLEU"/>
</dbReference>
<dbReference type="SUPFAM" id="SSF47323">
    <property type="entry name" value="Anticodon-binding domain of a subclass of class I aminoacyl-tRNA synthetases"/>
    <property type="match status" value="1"/>
</dbReference>
<dbReference type="SUPFAM" id="SSF52374">
    <property type="entry name" value="Nucleotidylyl transferase"/>
    <property type="match status" value="1"/>
</dbReference>
<dbReference type="SUPFAM" id="SSF50677">
    <property type="entry name" value="ValRS/IleRS/LeuRS editing domain"/>
    <property type="match status" value="1"/>
</dbReference>
<dbReference type="PROSITE" id="PS00178">
    <property type="entry name" value="AA_TRNA_LIGASE_I"/>
    <property type="match status" value="1"/>
</dbReference>
<comment type="catalytic activity">
    <reaction evidence="1">
        <text>tRNA(Leu) + L-leucine + ATP = L-leucyl-tRNA(Leu) + AMP + diphosphate</text>
        <dbReference type="Rhea" id="RHEA:11688"/>
        <dbReference type="Rhea" id="RHEA-COMP:9613"/>
        <dbReference type="Rhea" id="RHEA-COMP:9622"/>
        <dbReference type="ChEBI" id="CHEBI:30616"/>
        <dbReference type="ChEBI" id="CHEBI:33019"/>
        <dbReference type="ChEBI" id="CHEBI:57427"/>
        <dbReference type="ChEBI" id="CHEBI:78442"/>
        <dbReference type="ChEBI" id="CHEBI:78494"/>
        <dbReference type="ChEBI" id="CHEBI:456215"/>
        <dbReference type="EC" id="6.1.1.4"/>
    </reaction>
</comment>
<comment type="subcellular location">
    <subcellularLocation>
        <location evidence="1">Cytoplasm</location>
    </subcellularLocation>
</comment>
<comment type="similarity">
    <text evidence="1">Belongs to the class-I aminoacyl-tRNA synthetase family.</text>
</comment>
<keyword id="KW-0030">Aminoacyl-tRNA synthetase</keyword>
<keyword id="KW-0067">ATP-binding</keyword>
<keyword id="KW-0963">Cytoplasm</keyword>
<keyword id="KW-0436">Ligase</keyword>
<keyword id="KW-0547">Nucleotide-binding</keyword>
<keyword id="KW-0648">Protein biosynthesis</keyword>
<keyword id="KW-1185">Reference proteome</keyword>
<reference key="1">
    <citation type="journal article" date="2002" name="J. Bacteriol.">
        <title>Genome sequence and analysis of the oral bacterium Fusobacterium nucleatum strain ATCC 25586.</title>
        <authorList>
            <person name="Kapatral V."/>
            <person name="Anderson I."/>
            <person name="Ivanova N."/>
            <person name="Reznik G."/>
            <person name="Los T."/>
            <person name="Lykidis A."/>
            <person name="Bhattacharyya A."/>
            <person name="Bartman A."/>
            <person name="Gardner W."/>
            <person name="Grechkin G."/>
            <person name="Zhu L."/>
            <person name="Vasieva O."/>
            <person name="Chu L."/>
            <person name="Kogan Y."/>
            <person name="Chaga O."/>
            <person name="Goltsman E."/>
            <person name="Bernal A."/>
            <person name="Larsen N."/>
            <person name="D'Souza M."/>
            <person name="Walunas T."/>
            <person name="Pusch G."/>
            <person name="Haselkorn R."/>
            <person name="Fonstein M."/>
            <person name="Kyrpides N.C."/>
            <person name="Overbeek R."/>
        </authorList>
    </citation>
    <scope>NUCLEOTIDE SEQUENCE [LARGE SCALE GENOMIC DNA]</scope>
    <source>
        <strain>ATCC 25586 / DSM 15643 / BCRC 10681 / CIP 101130 / JCM 8532 / KCTC 2640 / LMG 13131 / VPI 4355</strain>
    </source>
</reference>
<protein>
    <recommendedName>
        <fullName evidence="1">Leucine--tRNA ligase</fullName>
        <ecNumber evidence="1">6.1.1.4</ecNumber>
    </recommendedName>
    <alternativeName>
        <fullName evidence="1">Leucyl-tRNA synthetase</fullName>
        <shortName evidence="1">LeuRS</shortName>
    </alternativeName>
</protein>
<feature type="chain" id="PRO_0000152018" description="Leucine--tRNA ligase">
    <location>
        <begin position="1"/>
        <end position="859"/>
    </location>
</feature>
<feature type="short sequence motif" description="'HIGH' region">
    <location>
        <begin position="42"/>
        <end position="52"/>
    </location>
</feature>
<feature type="short sequence motif" description="'KMSKS' region">
    <location>
        <begin position="611"/>
        <end position="615"/>
    </location>
</feature>
<feature type="binding site" evidence="1">
    <location>
        <position position="614"/>
    </location>
    <ligand>
        <name>ATP</name>
        <dbReference type="ChEBI" id="CHEBI:30616"/>
    </ligand>
</feature>
<name>SYL_FUSNN</name>
<proteinExistence type="inferred from homology"/>